<organism>
    <name type="scientific">Cereibacter sphaeroides (strain ATCC 17025 / ATH 2.4.3)</name>
    <name type="common">Rhodobacter sphaeroides</name>
    <dbReference type="NCBI Taxonomy" id="349102"/>
    <lineage>
        <taxon>Bacteria</taxon>
        <taxon>Pseudomonadati</taxon>
        <taxon>Pseudomonadota</taxon>
        <taxon>Alphaproteobacteria</taxon>
        <taxon>Rhodobacterales</taxon>
        <taxon>Paracoccaceae</taxon>
        <taxon>Cereibacter</taxon>
    </lineage>
</organism>
<keyword id="KW-0067">ATP-binding</keyword>
<keyword id="KW-0997">Cell inner membrane</keyword>
<keyword id="KW-1003">Cell membrane</keyword>
<keyword id="KW-0963">Cytoplasm</keyword>
<keyword id="KW-0472">Membrane</keyword>
<keyword id="KW-0479">Metal-binding</keyword>
<keyword id="KW-0547">Nucleotide-binding</keyword>
<keyword id="KW-0653">Protein transport</keyword>
<keyword id="KW-1278">Translocase</keyword>
<keyword id="KW-0811">Translocation</keyword>
<keyword id="KW-0813">Transport</keyword>
<keyword id="KW-0862">Zinc</keyword>
<proteinExistence type="inferred from homology"/>
<accession>A4WW84</accession>
<evidence type="ECO:0000255" key="1">
    <source>
        <dbReference type="HAMAP-Rule" id="MF_01382"/>
    </source>
</evidence>
<evidence type="ECO:0000256" key="2">
    <source>
        <dbReference type="SAM" id="MobiDB-lite"/>
    </source>
</evidence>
<name>SECA_CERS5</name>
<protein>
    <recommendedName>
        <fullName evidence="1">Protein translocase subunit SecA</fullName>
        <ecNumber evidence="1">7.4.2.8</ecNumber>
    </recommendedName>
</protein>
<feature type="chain" id="PRO_0000318415" description="Protein translocase subunit SecA">
    <location>
        <begin position="1"/>
        <end position="906"/>
    </location>
</feature>
<feature type="region of interest" description="Disordered" evidence="2">
    <location>
        <begin position="845"/>
        <end position="882"/>
    </location>
</feature>
<feature type="compositionally biased region" description="Low complexity" evidence="2">
    <location>
        <begin position="846"/>
        <end position="862"/>
    </location>
</feature>
<feature type="binding site" evidence="1">
    <location>
        <position position="90"/>
    </location>
    <ligand>
        <name>ATP</name>
        <dbReference type="ChEBI" id="CHEBI:30616"/>
    </ligand>
</feature>
<feature type="binding site" evidence="1">
    <location>
        <begin position="108"/>
        <end position="112"/>
    </location>
    <ligand>
        <name>ATP</name>
        <dbReference type="ChEBI" id="CHEBI:30616"/>
    </ligand>
</feature>
<feature type="binding site" evidence="1">
    <location>
        <position position="503"/>
    </location>
    <ligand>
        <name>ATP</name>
        <dbReference type="ChEBI" id="CHEBI:30616"/>
    </ligand>
</feature>
<feature type="binding site" evidence="1">
    <location>
        <position position="890"/>
    </location>
    <ligand>
        <name>Zn(2+)</name>
        <dbReference type="ChEBI" id="CHEBI:29105"/>
    </ligand>
</feature>
<feature type="binding site" evidence="1">
    <location>
        <position position="892"/>
    </location>
    <ligand>
        <name>Zn(2+)</name>
        <dbReference type="ChEBI" id="CHEBI:29105"/>
    </ligand>
</feature>
<feature type="binding site" evidence="1">
    <location>
        <position position="901"/>
    </location>
    <ligand>
        <name>Zn(2+)</name>
        <dbReference type="ChEBI" id="CHEBI:29105"/>
    </ligand>
</feature>
<feature type="binding site" evidence="1">
    <location>
        <position position="902"/>
    </location>
    <ligand>
        <name>Zn(2+)</name>
        <dbReference type="ChEBI" id="CHEBI:29105"/>
    </ligand>
</feature>
<gene>
    <name evidence="1" type="primary">secA</name>
    <name type="ordered locus">Rsph17025_2761</name>
</gene>
<comment type="function">
    <text evidence="1">Part of the Sec protein translocase complex. Interacts with the SecYEG preprotein conducting channel. Has a central role in coupling the hydrolysis of ATP to the transfer of proteins into and across the cell membrane, serving both as a receptor for the preprotein-SecB complex and as an ATP-driven molecular motor driving the stepwise translocation of polypeptide chains across the membrane.</text>
</comment>
<comment type="catalytic activity">
    <reaction evidence="1">
        <text>ATP + H2O + cellular proteinSide 1 = ADP + phosphate + cellular proteinSide 2.</text>
        <dbReference type="EC" id="7.4.2.8"/>
    </reaction>
</comment>
<comment type="cofactor">
    <cofactor evidence="1">
        <name>Zn(2+)</name>
        <dbReference type="ChEBI" id="CHEBI:29105"/>
    </cofactor>
    <text evidence="1">May bind 1 zinc ion per subunit.</text>
</comment>
<comment type="subunit">
    <text evidence="1">Monomer and homodimer. Part of the essential Sec protein translocation apparatus which comprises SecA, SecYEG and auxiliary proteins SecDF-YajC and YidC.</text>
</comment>
<comment type="subcellular location">
    <subcellularLocation>
        <location evidence="1">Cell inner membrane</location>
        <topology evidence="1">Peripheral membrane protein</topology>
        <orientation evidence="1">Cytoplasmic side</orientation>
    </subcellularLocation>
    <subcellularLocation>
        <location evidence="1">Cytoplasm</location>
    </subcellularLocation>
    <text evidence="1">Distribution is 50-50.</text>
</comment>
<comment type="similarity">
    <text evidence="1">Belongs to the SecA family.</text>
</comment>
<dbReference type="EC" id="7.4.2.8" evidence="1"/>
<dbReference type="EMBL" id="CP000661">
    <property type="protein sequence ID" value="ABP71648.1"/>
    <property type="molecule type" value="Genomic_DNA"/>
</dbReference>
<dbReference type="SMR" id="A4WW84"/>
<dbReference type="STRING" id="349102.Rsph17025_2761"/>
<dbReference type="KEGG" id="rsq:Rsph17025_2761"/>
<dbReference type="eggNOG" id="COG0653">
    <property type="taxonomic scope" value="Bacteria"/>
</dbReference>
<dbReference type="HOGENOM" id="CLU_005314_3_0_5"/>
<dbReference type="BioCyc" id="RSPH349102:G1G8M-2842-MONOMER"/>
<dbReference type="GO" id="GO:0031522">
    <property type="term" value="C:cell envelope Sec protein transport complex"/>
    <property type="evidence" value="ECO:0007669"/>
    <property type="project" value="TreeGrafter"/>
</dbReference>
<dbReference type="GO" id="GO:0005829">
    <property type="term" value="C:cytosol"/>
    <property type="evidence" value="ECO:0007669"/>
    <property type="project" value="TreeGrafter"/>
</dbReference>
<dbReference type="GO" id="GO:0005886">
    <property type="term" value="C:plasma membrane"/>
    <property type="evidence" value="ECO:0007669"/>
    <property type="project" value="UniProtKB-SubCell"/>
</dbReference>
<dbReference type="GO" id="GO:0005524">
    <property type="term" value="F:ATP binding"/>
    <property type="evidence" value="ECO:0007669"/>
    <property type="project" value="UniProtKB-UniRule"/>
</dbReference>
<dbReference type="GO" id="GO:0046872">
    <property type="term" value="F:metal ion binding"/>
    <property type="evidence" value="ECO:0007669"/>
    <property type="project" value="UniProtKB-KW"/>
</dbReference>
<dbReference type="GO" id="GO:0008564">
    <property type="term" value="F:protein-exporting ATPase activity"/>
    <property type="evidence" value="ECO:0007669"/>
    <property type="project" value="UniProtKB-EC"/>
</dbReference>
<dbReference type="GO" id="GO:0065002">
    <property type="term" value="P:intracellular protein transmembrane transport"/>
    <property type="evidence" value="ECO:0007669"/>
    <property type="project" value="UniProtKB-UniRule"/>
</dbReference>
<dbReference type="GO" id="GO:0017038">
    <property type="term" value="P:protein import"/>
    <property type="evidence" value="ECO:0007669"/>
    <property type="project" value="InterPro"/>
</dbReference>
<dbReference type="GO" id="GO:0006605">
    <property type="term" value="P:protein targeting"/>
    <property type="evidence" value="ECO:0007669"/>
    <property type="project" value="UniProtKB-UniRule"/>
</dbReference>
<dbReference type="GO" id="GO:0043952">
    <property type="term" value="P:protein transport by the Sec complex"/>
    <property type="evidence" value="ECO:0007669"/>
    <property type="project" value="TreeGrafter"/>
</dbReference>
<dbReference type="CDD" id="cd17928">
    <property type="entry name" value="DEXDc_SecA"/>
    <property type="match status" value="1"/>
</dbReference>
<dbReference type="CDD" id="cd18803">
    <property type="entry name" value="SF2_C_secA"/>
    <property type="match status" value="1"/>
</dbReference>
<dbReference type="FunFam" id="3.40.50.300:FF:000113">
    <property type="entry name" value="Preprotein translocase subunit SecA"/>
    <property type="match status" value="1"/>
</dbReference>
<dbReference type="FunFam" id="3.90.1440.10:FF:000001">
    <property type="entry name" value="Preprotein translocase subunit SecA"/>
    <property type="match status" value="1"/>
</dbReference>
<dbReference type="FunFam" id="1.10.3060.10:FF:000003">
    <property type="entry name" value="Protein translocase subunit SecA"/>
    <property type="match status" value="1"/>
</dbReference>
<dbReference type="Gene3D" id="1.10.3060.10">
    <property type="entry name" value="Helical scaffold and wing domains of SecA"/>
    <property type="match status" value="1"/>
</dbReference>
<dbReference type="Gene3D" id="3.40.50.300">
    <property type="entry name" value="P-loop containing nucleotide triphosphate hydrolases"/>
    <property type="match status" value="2"/>
</dbReference>
<dbReference type="Gene3D" id="3.90.1440.10">
    <property type="entry name" value="SecA, preprotein cross-linking domain"/>
    <property type="match status" value="1"/>
</dbReference>
<dbReference type="HAMAP" id="MF_01382">
    <property type="entry name" value="SecA"/>
    <property type="match status" value="1"/>
</dbReference>
<dbReference type="InterPro" id="IPR014001">
    <property type="entry name" value="Helicase_ATP-bd"/>
</dbReference>
<dbReference type="InterPro" id="IPR001650">
    <property type="entry name" value="Helicase_C-like"/>
</dbReference>
<dbReference type="InterPro" id="IPR027417">
    <property type="entry name" value="P-loop_NTPase"/>
</dbReference>
<dbReference type="InterPro" id="IPR004027">
    <property type="entry name" value="SEC_C_motif"/>
</dbReference>
<dbReference type="InterPro" id="IPR000185">
    <property type="entry name" value="SecA"/>
</dbReference>
<dbReference type="InterPro" id="IPR020937">
    <property type="entry name" value="SecA_CS"/>
</dbReference>
<dbReference type="InterPro" id="IPR011115">
    <property type="entry name" value="SecA_DEAD"/>
</dbReference>
<dbReference type="InterPro" id="IPR014018">
    <property type="entry name" value="SecA_motor_DEAD"/>
</dbReference>
<dbReference type="InterPro" id="IPR011130">
    <property type="entry name" value="SecA_preprotein_X-link_dom"/>
</dbReference>
<dbReference type="InterPro" id="IPR044722">
    <property type="entry name" value="SecA_SF2_C"/>
</dbReference>
<dbReference type="InterPro" id="IPR011116">
    <property type="entry name" value="SecA_Wing/Scaffold"/>
</dbReference>
<dbReference type="InterPro" id="IPR036266">
    <property type="entry name" value="SecA_Wing/Scaffold_sf"/>
</dbReference>
<dbReference type="InterPro" id="IPR036670">
    <property type="entry name" value="SecA_X-link_sf"/>
</dbReference>
<dbReference type="NCBIfam" id="NF009538">
    <property type="entry name" value="PRK12904.1"/>
    <property type="match status" value="1"/>
</dbReference>
<dbReference type="NCBIfam" id="TIGR00963">
    <property type="entry name" value="secA"/>
    <property type="match status" value="1"/>
</dbReference>
<dbReference type="PANTHER" id="PTHR30612:SF0">
    <property type="entry name" value="CHLOROPLAST PROTEIN-TRANSPORTING ATPASE"/>
    <property type="match status" value="1"/>
</dbReference>
<dbReference type="PANTHER" id="PTHR30612">
    <property type="entry name" value="SECA INNER MEMBRANE COMPONENT OF SEC PROTEIN SECRETION SYSTEM"/>
    <property type="match status" value="1"/>
</dbReference>
<dbReference type="Pfam" id="PF21090">
    <property type="entry name" value="P-loop_SecA"/>
    <property type="match status" value="1"/>
</dbReference>
<dbReference type="Pfam" id="PF02810">
    <property type="entry name" value="SEC-C"/>
    <property type="match status" value="1"/>
</dbReference>
<dbReference type="Pfam" id="PF07517">
    <property type="entry name" value="SecA_DEAD"/>
    <property type="match status" value="1"/>
</dbReference>
<dbReference type="Pfam" id="PF01043">
    <property type="entry name" value="SecA_PP_bind"/>
    <property type="match status" value="1"/>
</dbReference>
<dbReference type="Pfam" id="PF07516">
    <property type="entry name" value="SecA_SW"/>
    <property type="match status" value="1"/>
</dbReference>
<dbReference type="PRINTS" id="PR00906">
    <property type="entry name" value="SECA"/>
</dbReference>
<dbReference type="SMART" id="SM00957">
    <property type="entry name" value="SecA_DEAD"/>
    <property type="match status" value="1"/>
</dbReference>
<dbReference type="SMART" id="SM00958">
    <property type="entry name" value="SecA_PP_bind"/>
    <property type="match status" value="1"/>
</dbReference>
<dbReference type="SUPFAM" id="SSF81886">
    <property type="entry name" value="Helical scaffold and wing domains of SecA"/>
    <property type="match status" value="1"/>
</dbReference>
<dbReference type="SUPFAM" id="SSF52540">
    <property type="entry name" value="P-loop containing nucleoside triphosphate hydrolases"/>
    <property type="match status" value="2"/>
</dbReference>
<dbReference type="SUPFAM" id="SSF81767">
    <property type="entry name" value="Pre-protein crosslinking domain of SecA"/>
    <property type="match status" value="1"/>
</dbReference>
<dbReference type="PROSITE" id="PS01312">
    <property type="entry name" value="SECA"/>
    <property type="match status" value="1"/>
</dbReference>
<dbReference type="PROSITE" id="PS51196">
    <property type="entry name" value="SECA_MOTOR_DEAD"/>
    <property type="match status" value="1"/>
</dbReference>
<sequence>MLGLGTLARKIFGTPNDRKVKSVRSLVARINELETEFQALSDEGIKQKTAEFQRRVQEGGESLDDLLPEAFANCREGARRALGLRAFDVQLMGGIFLHQGNIAEMKTGEGKTLVATFPAYLNALAGKGVHVVTVNDYLAKRDSEWMGKVYAQLGLTTGVVYPFQSEEEKKAAYRADITYATNNELGFDYLRDNMKASKEEMKQRGHFFAIVDEVDSILIDEARTPLIISGPSQDRSDLYTKVDKLIPELVEEHYKLDEKTRNVTFTEEGNEFLETRLHETGLLPEGQSLYDPESTTIVHHVNQGLRAHKLFHRDQQYIVRNDEIMLIDEFTGRMMRGRRLSDGLHQAIEAKEGVSIQPENVTLASVTFQNYFRLYDKLGGMTGTAATEAEEFMEIYGLGVVEVPTNRPVARTDEHDAVYRTAREKNDGIVASIKEAHERGQPILVGTTSIDKSEALSELLKAAGIPHNVLNARQHEQEAQIVADAGKPGAVTIATNMAGRGTDIQLGGNVEMKVMQALAADPTAHPDEIRARIEAEHAEEKQKVIDAGGLFVLGTERHESRRIDNQLRGRSGRQGDPGRSAFFLSLEDDLMRIFGSDRLDKVLSTLGMKDGEAIVHPWVNKSLEKAQAKVEARNFDIRKQLLKFDDVMNDQRKAIFSQRLEIMEAEDLSDIAQDMRYQVIDDLIDMHMPPKSYSDQWDIEGMHRAVMDKLGLDAPLAKWAQEEGVDQDVVRERLCEAADRQIADKTAAFGPETMRSIEKQILLQAIDAKWREHLLTLEHLRSVVGFRGYAQRDPLSEYKTEAFALFESMLNSLRQDVTQKLAQVRPLSEEEQQAVMRQFLDQQRTAAEAPASVPQPQAAVAPQPAPELVGADNGESQPQAWGDVARNDPCPCGSGLKYKHCHGRLD</sequence>
<reference key="1">
    <citation type="submission" date="2007-04" db="EMBL/GenBank/DDBJ databases">
        <title>Complete sequence of chromosome of Rhodobacter sphaeroides ATCC 17025.</title>
        <authorList>
            <consortium name="US DOE Joint Genome Institute"/>
            <person name="Copeland A."/>
            <person name="Lucas S."/>
            <person name="Lapidus A."/>
            <person name="Barry K."/>
            <person name="Detter J.C."/>
            <person name="Glavina del Rio T."/>
            <person name="Hammon N."/>
            <person name="Israni S."/>
            <person name="Dalin E."/>
            <person name="Tice H."/>
            <person name="Pitluck S."/>
            <person name="Chertkov O."/>
            <person name="Brettin T."/>
            <person name="Bruce D."/>
            <person name="Han C."/>
            <person name="Schmutz J."/>
            <person name="Larimer F."/>
            <person name="Land M."/>
            <person name="Hauser L."/>
            <person name="Kyrpides N."/>
            <person name="Kim E."/>
            <person name="Richardson P."/>
            <person name="Mackenzie C."/>
            <person name="Choudhary M."/>
            <person name="Donohue T.J."/>
            <person name="Kaplan S."/>
        </authorList>
    </citation>
    <scope>NUCLEOTIDE SEQUENCE [LARGE SCALE GENOMIC DNA]</scope>
    <source>
        <strain>ATCC 17025 / ATH 2.4.3</strain>
    </source>
</reference>